<name>PCP_BACHK</name>
<reference key="1">
    <citation type="journal article" date="2006" name="J. Bacteriol.">
        <title>Pathogenomic sequence analysis of Bacillus cereus and Bacillus thuringiensis isolates closely related to Bacillus anthracis.</title>
        <authorList>
            <person name="Han C.S."/>
            <person name="Xie G."/>
            <person name="Challacombe J.F."/>
            <person name="Altherr M.R."/>
            <person name="Bhotika S.S."/>
            <person name="Bruce D."/>
            <person name="Campbell C.S."/>
            <person name="Campbell M.L."/>
            <person name="Chen J."/>
            <person name="Chertkov O."/>
            <person name="Cleland C."/>
            <person name="Dimitrijevic M."/>
            <person name="Doggett N.A."/>
            <person name="Fawcett J.J."/>
            <person name="Glavina T."/>
            <person name="Goodwin L.A."/>
            <person name="Hill K.K."/>
            <person name="Hitchcock P."/>
            <person name="Jackson P.J."/>
            <person name="Keim P."/>
            <person name="Kewalramani A.R."/>
            <person name="Longmire J."/>
            <person name="Lucas S."/>
            <person name="Malfatti S."/>
            <person name="McMurry K."/>
            <person name="Meincke L.J."/>
            <person name="Misra M."/>
            <person name="Moseman B.L."/>
            <person name="Mundt M."/>
            <person name="Munk A.C."/>
            <person name="Okinaka R.T."/>
            <person name="Parson-Quintana B."/>
            <person name="Reilly L.P."/>
            <person name="Richardson P."/>
            <person name="Robinson D.L."/>
            <person name="Rubin E."/>
            <person name="Saunders E."/>
            <person name="Tapia R."/>
            <person name="Tesmer J.G."/>
            <person name="Thayer N."/>
            <person name="Thompson L.S."/>
            <person name="Tice H."/>
            <person name="Ticknor L.O."/>
            <person name="Wills P.L."/>
            <person name="Brettin T.S."/>
            <person name="Gilna P."/>
        </authorList>
    </citation>
    <scope>NUCLEOTIDE SEQUENCE [LARGE SCALE GENOMIC DNA]</scope>
    <source>
        <strain>97-27</strain>
    </source>
</reference>
<keyword id="KW-0963">Cytoplasm</keyword>
<keyword id="KW-0378">Hydrolase</keyword>
<keyword id="KW-0645">Protease</keyword>
<keyword id="KW-0788">Thiol protease</keyword>
<dbReference type="EC" id="3.4.19.3" evidence="1"/>
<dbReference type="EMBL" id="AE017355">
    <property type="protein sequence ID" value="AAT60183.1"/>
    <property type="molecule type" value="Genomic_DNA"/>
</dbReference>
<dbReference type="RefSeq" id="WP_000859738.1">
    <property type="nucleotide sequence ID" value="NC_005957.1"/>
</dbReference>
<dbReference type="RefSeq" id="YP_037168.1">
    <property type="nucleotide sequence ID" value="NC_005957.1"/>
</dbReference>
<dbReference type="SMR" id="Q6HH08"/>
<dbReference type="MEROPS" id="C15.001"/>
<dbReference type="KEGG" id="btk:BT9727_2844"/>
<dbReference type="PATRIC" id="fig|281309.8.peg.3019"/>
<dbReference type="HOGENOM" id="CLU_043960_4_0_9"/>
<dbReference type="Proteomes" id="UP000001301">
    <property type="component" value="Chromosome"/>
</dbReference>
<dbReference type="GO" id="GO:0005829">
    <property type="term" value="C:cytosol"/>
    <property type="evidence" value="ECO:0007669"/>
    <property type="project" value="InterPro"/>
</dbReference>
<dbReference type="GO" id="GO:0016920">
    <property type="term" value="F:pyroglutamyl-peptidase activity"/>
    <property type="evidence" value="ECO:0007669"/>
    <property type="project" value="UniProtKB-UniRule"/>
</dbReference>
<dbReference type="GO" id="GO:0006508">
    <property type="term" value="P:proteolysis"/>
    <property type="evidence" value="ECO:0007669"/>
    <property type="project" value="UniProtKB-KW"/>
</dbReference>
<dbReference type="CDD" id="cd00501">
    <property type="entry name" value="Peptidase_C15"/>
    <property type="match status" value="1"/>
</dbReference>
<dbReference type="FunFam" id="3.40.630.20:FF:000001">
    <property type="entry name" value="Pyrrolidone-carboxylate peptidase"/>
    <property type="match status" value="1"/>
</dbReference>
<dbReference type="Gene3D" id="3.40.630.20">
    <property type="entry name" value="Peptidase C15, pyroglutamyl peptidase I-like"/>
    <property type="match status" value="1"/>
</dbReference>
<dbReference type="HAMAP" id="MF_00417">
    <property type="entry name" value="Pyrrolid_peptidase"/>
    <property type="match status" value="1"/>
</dbReference>
<dbReference type="InterPro" id="IPR000816">
    <property type="entry name" value="Peptidase_C15"/>
</dbReference>
<dbReference type="InterPro" id="IPR016125">
    <property type="entry name" value="Peptidase_C15-like"/>
</dbReference>
<dbReference type="InterPro" id="IPR036440">
    <property type="entry name" value="Peptidase_C15-like_sf"/>
</dbReference>
<dbReference type="InterPro" id="IPR029762">
    <property type="entry name" value="PGP-I_bact-type"/>
</dbReference>
<dbReference type="InterPro" id="IPR033694">
    <property type="entry name" value="PGPEP1_Cys_AS"/>
</dbReference>
<dbReference type="InterPro" id="IPR033693">
    <property type="entry name" value="PGPEP1_Glu_AS"/>
</dbReference>
<dbReference type="NCBIfam" id="NF009676">
    <property type="entry name" value="PRK13197.1"/>
    <property type="match status" value="1"/>
</dbReference>
<dbReference type="NCBIfam" id="TIGR00504">
    <property type="entry name" value="pyro_pdase"/>
    <property type="match status" value="1"/>
</dbReference>
<dbReference type="PANTHER" id="PTHR23402">
    <property type="entry name" value="PROTEASE FAMILY C15 PYROGLUTAMYL-PEPTIDASE I-RELATED"/>
    <property type="match status" value="1"/>
</dbReference>
<dbReference type="PANTHER" id="PTHR23402:SF1">
    <property type="entry name" value="PYROGLUTAMYL-PEPTIDASE I"/>
    <property type="match status" value="1"/>
</dbReference>
<dbReference type="Pfam" id="PF01470">
    <property type="entry name" value="Peptidase_C15"/>
    <property type="match status" value="1"/>
</dbReference>
<dbReference type="PIRSF" id="PIRSF015592">
    <property type="entry name" value="Prld-crbxl_pptds"/>
    <property type="match status" value="1"/>
</dbReference>
<dbReference type="PRINTS" id="PR00706">
    <property type="entry name" value="PYROGLUPTASE"/>
</dbReference>
<dbReference type="SUPFAM" id="SSF53182">
    <property type="entry name" value="Pyrrolidone carboxyl peptidase (pyroglutamate aminopeptidase)"/>
    <property type="match status" value="1"/>
</dbReference>
<dbReference type="PROSITE" id="PS01334">
    <property type="entry name" value="PYRASE_CYS"/>
    <property type="match status" value="1"/>
</dbReference>
<dbReference type="PROSITE" id="PS01333">
    <property type="entry name" value="PYRASE_GLU"/>
    <property type="match status" value="1"/>
</dbReference>
<comment type="function">
    <text evidence="1">Removes 5-oxoproline from various penultimate amino acid residues except L-proline.</text>
</comment>
<comment type="catalytic activity">
    <reaction evidence="1">
        <text>Release of an N-terminal pyroglutamyl group from a polypeptide, the second amino acid generally not being Pro.</text>
        <dbReference type="EC" id="3.4.19.3"/>
    </reaction>
</comment>
<comment type="subunit">
    <text evidence="1">Homotetramer.</text>
</comment>
<comment type="subcellular location">
    <subcellularLocation>
        <location evidence="1">Cytoplasm</location>
    </subcellularLocation>
</comment>
<comment type="similarity">
    <text evidence="1">Belongs to the peptidase C15 family.</text>
</comment>
<accession>Q6HH08</accession>
<gene>
    <name evidence="1" type="primary">pcp</name>
    <name type="ordered locus">BT9727_2844</name>
</gene>
<protein>
    <recommendedName>
        <fullName evidence="1">Pyrrolidone-carboxylate peptidase</fullName>
        <ecNumber evidence="1">3.4.19.3</ecNumber>
    </recommendedName>
    <alternativeName>
        <fullName evidence="1">5-oxoprolyl-peptidase</fullName>
    </alternativeName>
    <alternativeName>
        <fullName evidence="1">Pyroglutamyl-peptidase I</fullName>
        <shortName evidence="1">PGP-I</shortName>
        <shortName evidence="1">Pyrase</shortName>
    </alternativeName>
</protein>
<organism>
    <name type="scientific">Bacillus thuringiensis subsp. konkukian (strain 97-27)</name>
    <dbReference type="NCBI Taxonomy" id="281309"/>
    <lineage>
        <taxon>Bacteria</taxon>
        <taxon>Bacillati</taxon>
        <taxon>Bacillota</taxon>
        <taxon>Bacilli</taxon>
        <taxon>Bacillales</taxon>
        <taxon>Bacillaceae</taxon>
        <taxon>Bacillus</taxon>
        <taxon>Bacillus cereus group</taxon>
    </lineage>
</organism>
<feature type="chain" id="PRO_0000184712" description="Pyrrolidone-carboxylate peptidase">
    <location>
        <begin position="1"/>
        <end position="215"/>
    </location>
</feature>
<feature type="active site" evidence="1">
    <location>
        <position position="80"/>
    </location>
</feature>
<feature type="active site" evidence="1">
    <location>
        <position position="143"/>
    </location>
</feature>
<feature type="active site" evidence="1">
    <location>
        <position position="167"/>
    </location>
</feature>
<evidence type="ECO:0000255" key="1">
    <source>
        <dbReference type="HAMAP-Rule" id="MF_00417"/>
    </source>
</evidence>
<sequence length="215" mass="23489">MKTVLLTGFDPFGGESINPAWEVAKSLHEKTIGEYKIISKQVPTVFHKSISVLKEYIEELAPEFIICMGQAGGRPDITIERVAINIDDARIADNEGNQPVDVPVVEEGPAAYWSTLPMKAIVKKLQEEGIPASVSQTAGTFVCNHLFYGLMHELEKHDTKMKGGFIHIPFLPEQASNYPGQPSMSLSTIRKGIGLAVEVTMTVEVDIVEVGGTTH</sequence>
<proteinExistence type="inferred from homology"/>